<sequence length="309" mass="32958">MVKIYAPASIGNVSIGFDVLGAAVTPLDGTLLGDCVSIAASSHFSLHCHGRFVDSLPSTVQENIVYQCWQRFCEVTGRELAVEMVLEKNMPIGSGLGSSACSVVAALAALNRFAGEPLDAHRLLMLMGELEGRISGSVHYDNVAPCYLGGLQLMLEAQEIISQPVPCFDEWLWVMAYPGIKVSTAEARAILPPHYSRGDCVRHGRHLAGFIHACHTRQPSLAAALMQDVIAEPYRCGLLPGFADARRAAGELGALACGISGSGPTLFAVCDDLTAAQAVAQWLAQHYLQNEQGFVHICRLDSAGARQLG</sequence>
<organism>
    <name type="scientific">Edwardsiella ictaluri (strain 93-146)</name>
    <dbReference type="NCBI Taxonomy" id="634503"/>
    <lineage>
        <taxon>Bacteria</taxon>
        <taxon>Pseudomonadati</taxon>
        <taxon>Pseudomonadota</taxon>
        <taxon>Gammaproteobacteria</taxon>
        <taxon>Enterobacterales</taxon>
        <taxon>Hafniaceae</taxon>
        <taxon>Edwardsiella</taxon>
    </lineage>
</organism>
<proteinExistence type="inferred from homology"/>
<name>KHSE_EDWI9</name>
<comment type="function">
    <text evidence="1">Catalyzes the ATP-dependent phosphorylation of L-homoserine to L-homoserine phosphate.</text>
</comment>
<comment type="catalytic activity">
    <reaction evidence="1">
        <text>L-homoserine + ATP = O-phospho-L-homoserine + ADP + H(+)</text>
        <dbReference type="Rhea" id="RHEA:13985"/>
        <dbReference type="ChEBI" id="CHEBI:15378"/>
        <dbReference type="ChEBI" id="CHEBI:30616"/>
        <dbReference type="ChEBI" id="CHEBI:57476"/>
        <dbReference type="ChEBI" id="CHEBI:57590"/>
        <dbReference type="ChEBI" id="CHEBI:456216"/>
        <dbReference type="EC" id="2.7.1.39"/>
    </reaction>
</comment>
<comment type="pathway">
    <text evidence="1">Amino-acid biosynthesis; L-threonine biosynthesis; L-threonine from L-aspartate: step 4/5.</text>
</comment>
<comment type="subcellular location">
    <subcellularLocation>
        <location evidence="1">Cytoplasm</location>
    </subcellularLocation>
</comment>
<comment type="similarity">
    <text evidence="1">Belongs to the GHMP kinase family. Homoserine kinase subfamily.</text>
</comment>
<feature type="chain" id="PRO_1000205734" description="Homoserine kinase">
    <location>
        <begin position="1"/>
        <end position="309"/>
    </location>
</feature>
<feature type="binding site" evidence="1">
    <location>
        <begin position="91"/>
        <end position="101"/>
    </location>
    <ligand>
        <name>ATP</name>
        <dbReference type="ChEBI" id="CHEBI:30616"/>
    </ligand>
</feature>
<reference key="1">
    <citation type="submission" date="2009-03" db="EMBL/GenBank/DDBJ databases">
        <title>Complete genome sequence of Edwardsiella ictaluri 93-146.</title>
        <authorList>
            <person name="Williams M.L."/>
            <person name="Gillaspy A.F."/>
            <person name="Dyer D.W."/>
            <person name="Thune R.L."/>
            <person name="Waldbieser G.C."/>
            <person name="Schuster S.C."/>
            <person name="Gipson J."/>
            <person name="Zaitshik J."/>
            <person name="Landry C."/>
            <person name="Lawrence M.L."/>
        </authorList>
    </citation>
    <scope>NUCLEOTIDE SEQUENCE [LARGE SCALE GENOMIC DNA]</scope>
    <source>
        <strain>93-146</strain>
    </source>
</reference>
<gene>
    <name evidence="1" type="primary">thrB</name>
    <name type="ordered locus">NT01EI_0660</name>
</gene>
<accession>C5B7K5</accession>
<protein>
    <recommendedName>
        <fullName evidence="1">Homoserine kinase</fullName>
        <shortName evidence="1">HK</shortName>
        <shortName evidence="1">HSK</shortName>
        <ecNumber evidence="1">2.7.1.39</ecNumber>
    </recommendedName>
</protein>
<evidence type="ECO:0000255" key="1">
    <source>
        <dbReference type="HAMAP-Rule" id="MF_00384"/>
    </source>
</evidence>
<keyword id="KW-0028">Amino-acid biosynthesis</keyword>
<keyword id="KW-0067">ATP-binding</keyword>
<keyword id="KW-0963">Cytoplasm</keyword>
<keyword id="KW-0418">Kinase</keyword>
<keyword id="KW-0547">Nucleotide-binding</keyword>
<keyword id="KW-0791">Threonine biosynthesis</keyword>
<keyword id="KW-0808">Transferase</keyword>
<dbReference type="EC" id="2.7.1.39" evidence="1"/>
<dbReference type="EMBL" id="CP001600">
    <property type="protein sequence ID" value="ACR67882.1"/>
    <property type="molecule type" value="Genomic_DNA"/>
</dbReference>
<dbReference type="RefSeq" id="WP_015870076.1">
    <property type="nucleotide sequence ID" value="NZ_CP169062.1"/>
</dbReference>
<dbReference type="SMR" id="C5B7K5"/>
<dbReference type="STRING" id="67780.B6E78_13970"/>
<dbReference type="GeneID" id="69537729"/>
<dbReference type="KEGG" id="eic:NT01EI_0660"/>
<dbReference type="PATRIC" id="fig|634503.3.peg.594"/>
<dbReference type="HOGENOM" id="CLU_041243_1_1_6"/>
<dbReference type="OrthoDB" id="9769912at2"/>
<dbReference type="UniPathway" id="UPA00050">
    <property type="reaction ID" value="UER00064"/>
</dbReference>
<dbReference type="Proteomes" id="UP000001485">
    <property type="component" value="Chromosome"/>
</dbReference>
<dbReference type="GO" id="GO:0005737">
    <property type="term" value="C:cytoplasm"/>
    <property type="evidence" value="ECO:0007669"/>
    <property type="project" value="UniProtKB-SubCell"/>
</dbReference>
<dbReference type="GO" id="GO:0005524">
    <property type="term" value="F:ATP binding"/>
    <property type="evidence" value="ECO:0007669"/>
    <property type="project" value="UniProtKB-UniRule"/>
</dbReference>
<dbReference type="GO" id="GO:0004413">
    <property type="term" value="F:homoserine kinase activity"/>
    <property type="evidence" value="ECO:0007669"/>
    <property type="project" value="UniProtKB-UniRule"/>
</dbReference>
<dbReference type="GO" id="GO:0009088">
    <property type="term" value="P:threonine biosynthetic process"/>
    <property type="evidence" value="ECO:0007669"/>
    <property type="project" value="UniProtKB-UniRule"/>
</dbReference>
<dbReference type="Gene3D" id="3.30.230.10">
    <property type="match status" value="1"/>
</dbReference>
<dbReference type="Gene3D" id="3.30.70.890">
    <property type="entry name" value="GHMP kinase, C-terminal domain"/>
    <property type="match status" value="1"/>
</dbReference>
<dbReference type="HAMAP" id="MF_00384">
    <property type="entry name" value="Homoser_kinase"/>
    <property type="match status" value="1"/>
</dbReference>
<dbReference type="InterPro" id="IPR013750">
    <property type="entry name" value="GHMP_kinase_C_dom"/>
</dbReference>
<dbReference type="InterPro" id="IPR036554">
    <property type="entry name" value="GHMP_kinase_C_sf"/>
</dbReference>
<dbReference type="InterPro" id="IPR006204">
    <property type="entry name" value="GHMP_kinase_N_dom"/>
</dbReference>
<dbReference type="InterPro" id="IPR006203">
    <property type="entry name" value="GHMP_knse_ATP-bd_CS"/>
</dbReference>
<dbReference type="InterPro" id="IPR000870">
    <property type="entry name" value="Homoserine_kinase"/>
</dbReference>
<dbReference type="InterPro" id="IPR020568">
    <property type="entry name" value="Ribosomal_Su5_D2-typ_SF"/>
</dbReference>
<dbReference type="InterPro" id="IPR014721">
    <property type="entry name" value="Ribsml_uS5_D2-typ_fold_subgr"/>
</dbReference>
<dbReference type="NCBIfam" id="NF002288">
    <property type="entry name" value="PRK01212.1-4"/>
    <property type="match status" value="1"/>
</dbReference>
<dbReference type="NCBIfam" id="TIGR00191">
    <property type="entry name" value="thrB"/>
    <property type="match status" value="1"/>
</dbReference>
<dbReference type="PANTHER" id="PTHR20861:SF1">
    <property type="entry name" value="HOMOSERINE KINASE"/>
    <property type="match status" value="1"/>
</dbReference>
<dbReference type="PANTHER" id="PTHR20861">
    <property type="entry name" value="HOMOSERINE/4-DIPHOSPHOCYTIDYL-2-C-METHYL-D-ERYTHRITOL KINASE"/>
    <property type="match status" value="1"/>
</dbReference>
<dbReference type="Pfam" id="PF08544">
    <property type="entry name" value="GHMP_kinases_C"/>
    <property type="match status" value="1"/>
</dbReference>
<dbReference type="Pfam" id="PF00288">
    <property type="entry name" value="GHMP_kinases_N"/>
    <property type="match status" value="1"/>
</dbReference>
<dbReference type="PIRSF" id="PIRSF000676">
    <property type="entry name" value="Homoser_kin"/>
    <property type="match status" value="1"/>
</dbReference>
<dbReference type="PRINTS" id="PR00958">
    <property type="entry name" value="HOMSERKINASE"/>
</dbReference>
<dbReference type="SUPFAM" id="SSF55060">
    <property type="entry name" value="GHMP Kinase, C-terminal domain"/>
    <property type="match status" value="1"/>
</dbReference>
<dbReference type="SUPFAM" id="SSF54211">
    <property type="entry name" value="Ribosomal protein S5 domain 2-like"/>
    <property type="match status" value="1"/>
</dbReference>
<dbReference type="PROSITE" id="PS00627">
    <property type="entry name" value="GHMP_KINASES_ATP"/>
    <property type="match status" value="1"/>
</dbReference>